<accession>Q10Q26</accession>
<accession>A0A0P0VUT0</accession>
<proteinExistence type="evidence at transcript level"/>
<protein>
    <recommendedName>
        <fullName>B3 domain-containing protein Os03g0212300</fullName>
    </recommendedName>
</protein>
<evidence type="ECO:0000255" key="1">
    <source>
        <dbReference type="PROSITE-ProRule" id="PRU00326"/>
    </source>
</evidence>
<sequence>MEDQMANLRLTDFEFFRIILPGSSKTKLKLPYKFARELGDRELREARLRVAGEGRRPWDVKVFDDDVSGDVYLGRGWQEFARAHDLRDGHFLVFRYDGAAAFTVTVFDETMCRRDYRRHHDAAESGSSSSSDSSDAAAAVATAAAEGVGDVALSQFAVTLRQCNLEDKQAQYLNVPMEFQEAHEYARREKVVLRMRGEAWTVRLKHSRRERGQRTAFRYGWHRFCVDNGLAVGDTCFFRVLREGDLRRGGAADDHVLKVAVRKADGTTLE</sequence>
<organism>
    <name type="scientific">Oryza sativa subsp. japonica</name>
    <name type="common">Rice</name>
    <dbReference type="NCBI Taxonomy" id="39947"/>
    <lineage>
        <taxon>Eukaryota</taxon>
        <taxon>Viridiplantae</taxon>
        <taxon>Streptophyta</taxon>
        <taxon>Embryophyta</taxon>
        <taxon>Tracheophyta</taxon>
        <taxon>Spermatophyta</taxon>
        <taxon>Magnoliopsida</taxon>
        <taxon>Liliopsida</taxon>
        <taxon>Poales</taxon>
        <taxon>Poaceae</taxon>
        <taxon>BOP clade</taxon>
        <taxon>Oryzoideae</taxon>
        <taxon>Oryzeae</taxon>
        <taxon>Oryzinae</taxon>
        <taxon>Oryza</taxon>
        <taxon>Oryza sativa</taxon>
    </lineage>
</organism>
<gene>
    <name type="ordered locus">Os03g0212300</name>
    <name type="ordered locus">LOC_Os03g11370</name>
</gene>
<name>Y3123_ORYSJ</name>
<dbReference type="EMBL" id="DP000009">
    <property type="protein sequence ID" value="ABF94608.1"/>
    <property type="molecule type" value="Genomic_DNA"/>
</dbReference>
<dbReference type="EMBL" id="AP008209">
    <property type="protein sequence ID" value="BAF11268.1"/>
    <property type="molecule type" value="Genomic_DNA"/>
</dbReference>
<dbReference type="EMBL" id="AP014959">
    <property type="protein sequence ID" value="BAS82927.1"/>
    <property type="molecule type" value="Genomic_DNA"/>
</dbReference>
<dbReference type="EMBL" id="AK070861">
    <property type="protein sequence ID" value="BAG92179.1"/>
    <property type="molecule type" value="mRNA"/>
</dbReference>
<dbReference type="RefSeq" id="XP_015628624.1">
    <property type="nucleotide sequence ID" value="XM_015773138.1"/>
</dbReference>
<dbReference type="SMR" id="Q10Q26"/>
<dbReference type="STRING" id="39947.Q10Q26"/>
<dbReference type="PaxDb" id="39947-Q10Q26"/>
<dbReference type="EnsemblPlants" id="Os03t0212300-01">
    <property type="protein sequence ID" value="Os03t0212300-01"/>
    <property type="gene ID" value="Os03g0212300"/>
</dbReference>
<dbReference type="Gramene" id="Os03t0212300-01">
    <property type="protein sequence ID" value="Os03t0212300-01"/>
    <property type="gene ID" value="Os03g0212300"/>
</dbReference>
<dbReference type="KEGG" id="dosa:Os03g0212300"/>
<dbReference type="eggNOG" id="ENOG502S1AK">
    <property type="taxonomic scope" value="Eukaryota"/>
</dbReference>
<dbReference type="HOGENOM" id="CLU_015069_4_0_1"/>
<dbReference type="InParanoid" id="Q10Q26"/>
<dbReference type="OMA" id="HYKHHDD"/>
<dbReference type="OrthoDB" id="725474at2759"/>
<dbReference type="Proteomes" id="UP000000763">
    <property type="component" value="Chromosome 3"/>
</dbReference>
<dbReference type="Proteomes" id="UP000059680">
    <property type="component" value="Chromosome 3"/>
</dbReference>
<dbReference type="GO" id="GO:0005634">
    <property type="term" value="C:nucleus"/>
    <property type="evidence" value="ECO:0007669"/>
    <property type="project" value="UniProtKB-SubCell"/>
</dbReference>
<dbReference type="GO" id="GO:0003677">
    <property type="term" value="F:DNA binding"/>
    <property type="evidence" value="ECO:0007669"/>
    <property type="project" value="UniProtKB-KW"/>
</dbReference>
<dbReference type="CDD" id="cd10017">
    <property type="entry name" value="B3_DNA"/>
    <property type="match status" value="2"/>
</dbReference>
<dbReference type="Gene3D" id="2.40.330.10">
    <property type="entry name" value="DNA-binding pseudobarrel domain"/>
    <property type="match status" value="2"/>
</dbReference>
<dbReference type="InterPro" id="IPR003340">
    <property type="entry name" value="B3_DNA-bd"/>
</dbReference>
<dbReference type="InterPro" id="IPR015300">
    <property type="entry name" value="DNA-bd_pseudobarrel_sf"/>
</dbReference>
<dbReference type="InterPro" id="IPR039218">
    <property type="entry name" value="REM_fam"/>
</dbReference>
<dbReference type="PANTHER" id="PTHR31674:SF95">
    <property type="entry name" value="B3 DOMAIN-CONTAINING PROTEIN OS03G0212300"/>
    <property type="match status" value="1"/>
</dbReference>
<dbReference type="PANTHER" id="PTHR31674">
    <property type="entry name" value="B3 DOMAIN-CONTAINING PROTEIN REM-LIKE 3-RELATED"/>
    <property type="match status" value="1"/>
</dbReference>
<dbReference type="Pfam" id="PF02362">
    <property type="entry name" value="B3"/>
    <property type="match status" value="2"/>
</dbReference>
<dbReference type="SMART" id="SM01019">
    <property type="entry name" value="B3"/>
    <property type="match status" value="2"/>
</dbReference>
<dbReference type="SUPFAM" id="SSF101936">
    <property type="entry name" value="DNA-binding pseudobarrel domain"/>
    <property type="match status" value="2"/>
</dbReference>
<dbReference type="PROSITE" id="PS50863">
    <property type="entry name" value="B3"/>
    <property type="match status" value="2"/>
</dbReference>
<comment type="subcellular location">
    <subcellularLocation>
        <location evidence="1">Nucleus</location>
    </subcellularLocation>
</comment>
<reference key="1">
    <citation type="journal article" date="2005" name="Genome Res.">
        <title>Sequence, annotation, and analysis of synteny between rice chromosome 3 and diverged grass species.</title>
        <authorList>
            <consortium name="The rice chromosome 3 sequencing consortium"/>
            <person name="Buell C.R."/>
            <person name="Yuan Q."/>
            <person name="Ouyang S."/>
            <person name="Liu J."/>
            <person name="Zhu W."/>
            <person name="Wang A."/>
            <person name="Maiti R."/>
            <person name="Haas B."/>
            <person name="Wortman J."/>
            <person name="Pertea M."/>
            <person name="Jones K.M."/>
            <person name="Kim M."/>
            <person name="Overton L."/>
            <person name="Tsitrin T."/>
            <person name="Fadrosh D."/>
            <person name="Bera J."/>
            <person name="Weaver B."/>
            <person name="Jin S."/>
            <person name="Johri S."/>
            <person name="Reardon M."/>
            <person name="Webb K."/>
            <person name="Hill J."/>
            <person name="Moffat K."/>
            <person name="Tallon L."/>
            <person name="Van Aken S."/>
            <person name="Lewis M."/>
            <person name="Utterback T."/>
            <person name="Feldblyum T."/>
            <person name="Zismann V."/>
            <person name="Iobst S."/>
            <person name="Hsiao J."/>
            <person name="de Vazeille A.R."/>
            <person name="Salzberg S.L."/>
            <person name="White O."/>
            <person name="Fraser C.M."/>
            <person name="Yu Y."/>
            <person name="Kim H."/>
            <person name="Rambo T."/>
            <person name="Currie J."/>
            <person name="Collura K."/>
            <person name="Kernodle-Thompson S."/>
            <person name="Wei F."/>
            <person name="Kudrna K."/>
            <person name="Ammiraju J.S.S."/>
            <person name="Luo M."/>
            <person name="Goicoechea J.L."/>
            <person name="Wing R.A."/>
            <person name="Henry D."/>
            <person name="Oates R."/>
            <person name="Palmer M."/>
            <person name="Pries G."/>
            <person name="Saski C."/>
            <person name="Simmons J."/>
            <person name="Soderlund C."/>
            <person name="Nelson W."/>
            <person name="de la Bastide M."/>
            <person name="Spiegel L."/>
            <person name="Nascimento L."/>
            <person name="Huang E."/>
            <person name="Preston R."/>
            <person name="Zutavern T."/>
            <person name="Palmer L."/>
            <person name="O'Shaughnessy A."/>
            <person name="Dike S."/>
            <person name="McCombie W.R."/>
            <person name="Minx P."/>
            <person name="Cordum H."/>
            <person name="Wilson R."/>
            <person name="Jin W."/>
            <person name="Lee H.R."/>
            <person name="Jiang J."/>
            <person name="Jackson S."/>
        </authorList>
    </citation>
    <scope>NUCLEOTIDE SEQUENCE [LARGE SCALE GENOMIC DNA]</scope>
    <source>
        <strain>cv. Nipponbare</strain>
    </source>
</reference>
<reference key="2">
    <citation type="journal article" date="2005" name="Nature">
        <title>The map-based sequence of the rice genome.</title>
        <authorList>
            <consortium name="International rice genome sequencing project (IRGSP)"/>
        </authorList>
    </citation>
    <scope>NUCLEOTIDE SEQUENCE [LARGE SCALE GENOMIC DNA]</scope>
    <source>
        <strain>cv. Nipponbare</strain>
    </source>
</reference>
<reference key="3">
    <citation type="journal article" date="2008" name="Nucleic Acids Res.">
        <title>The rice annotation project database (RAP-DB): 2008 update.</title>
        <authorList>
            <consortium name="The rice annotation project (RAP)"/>
        </authorList>
    </citation>
    <scope>GENOME REANNOTATION</scope>
    <source>
        <strain>cv. Nipponbare</strain>
    </source>
</reference>
<reference key="4">
    <citation type="journal article" date="2013" name="Rice">
        <title>Improvement of the Oryza sativa Nipponbare reference genome using next generation sequence and optical map data.</title>
        <authorList>
            <person name="Kawahara Y."/>
            <person name="de la Bastide M."/>
            <person name="Hamilton J.P."/>
            <person name="Kanamori H."/>
            <person name="McCombie W.R."/>
            <person name="Ouyang S."/>
            <person name="Schwartz D.C."/>
            <person name="Tanaka T."/>
            <person name="Wu J."/>
            <person name="Zhou S."/>
            <person name="Childs K.L."/>
            <person name="Davidson R.M."/>
            <person name="Lin H."/>
            <person name="Quesada-Ocampo L."/>
            <person name="Vaillancourt B."/>
            <person name="Sakai H."/>
            <person name="Lee S.S."/>
            <person name="Kim J."/>
            <person name="Numa H."/>
            <person name="Itoh T."/>
            <person name="Buell C.R."/>
            <person name="Matsumoto T."/>
        </authorList>
    </citation>
    <scope>GENOME REANNOTATION</scope>
    <source>
        <strain>cv. Nipponbare</strain>
    </source>
</reference>
<reference key="5">
    <citation type="journal article" date="2003" name="Science">
        <title>Collection, mapping, and annotation of over 28,000 cDNA clones from japonica rice.</title>
        <authorList>
            <consortium name="The rice full-length cDNA consortium"/>
        </authorList>
    </citation>
    <scope>NUCLEOTIDE SEQUENCE [LARGE SCALE MRNA]</scope>
    <source>
        <strain>cv. Nipponbare</strain>
    </source>
</reference>
<keyword id="KW-0238">DNA-binding</keyword>
<keyword id="KW-0539">Nucleus</keyword>
<keyword id="KW-1185">Reference proteome</keyword>
<keyword id="KW-0677">Repeat</keyword>
<keyword id="KW-0804">Transcription</keyword>
<keyword id="KW-0805">Transcription regulation</keyword>
<feature type="chain" id="PRO_0000378045" description="B3 domain-containing protein Os03g0212300">
    <location>
        <begin position="1"/>
        <end position="270"/>
    </location>
</feature>
<feature type="DNA-binding region" description="TF-B3 1" evidence="1">
    <location>
        <begin position="13"/>
        <end position="110"/>
    </location>
</feature>
<feature type="DNA-binding region" description="TF-B3 2" evidence="1">
    <location>
        <begin position="158"/>
        <end position="265"/>
    </location>
</feature>